<accession>P37365</accession>
<organism>
    <name type="scientific">Arthrobacter sp. (strain Py1)</name>
    <dbReference type="NCBI Taxonomy" id="72571"/>
    <lineage>
        <taxon>Bacteria</taxon>
        <taxon>Bacillati</taxon>
        <taxon>Actinomycetota</taxon>
        <taxon>Actinomycetes</taxon>
        <taxon>Micrococcales</taxon>
        <taxon>Micrococcaceae</taxon>
        <taxon>Arthrobacter</taxon>
    </lineage>
</organism>
<proteinExistence type="evidence at protein level"/>
<keyword id="KW-0903">Direct protein sequencing</keyword>
<keyword id="KW-0274">FAD</keyword>
<keyword id="KW-0285">Flavoprotein</keyword>
<keyword id="KW-0503">Monooxygenase</keyword>
<keyword id="KW-0520">NAD</keyword>
<keyword id="KW-0560">Oxidoreductase</keyword>
<sequence>MRTGKQYLKSLNDGRTVILDGEVVGNVLXH</sequence>
<name>P2CO_ARTSY</name>
<reference key="1">
    <citation type="journal article" date="1994" name="Biol. Chem. Hoppe-Seyler">
        <title>Purification and characterization of a pyrrole-2-carboxylate oxygenase from Arthrobacter strain Py1.</title>
        <authorList>
            <person name="Hormann K."/>
            <person name="Andreesen J.R."/>
        </authorList>
    </citation>
    <scope>PROTEIN SEQUENCE</scope>
    <scope>FUNCTION</scope>
    <scope>CATALYTIC ACTIVITY</scope>
    <scope>COFACTOR</scope>
    <scope>SUBSTRATE SPECIFICITY</scope>
    <scope>SUBUNIT</scope>
    <source>
        <strain>Py1</strain>
    </source>
</reference>
<evidence type="ECO:0000269" key="1">
    <source>
    </source>
</evidence>
<evidence type="ECO:0000303" key="2">
    <source>
    </source>
</evidence>
<protein>
    <recommendedName>
        <fullName evidence="2">Pyrrole-2-carboxylate oxygenase</fullName>
        <ecNumber evidence="1">1.14.13.130</ecNumber>
    </recommendedName>
</protein>
<dbReference type="EC" id="1.14.13.130" evidence="1"/>
<dbReference type="GO" id="GO:0016627">
    <property type="term" value="F:oxidoreductase activity, acting on the CH-CH group of donors"/>
    <property type="evidence" value="ECO:0007669"/>
    <property type="project" value="InterPro"/>
</dbReference>
<dbReference type="GO" id="GO:0034938">
    <property type="term" value="F:pyrrole-2-carboxylate monooxygenase (NADH) activity"/>
    <property type="evidence" value="ECO:0007669"/>
    <property type="project" value="UniProtKB-EC"/>
</dbReference>
<dbReference type="Gene3D" id="1.10.3140.10">
    <property type="entry name" value="4-hydroxybutyryl-coa dehydratase, domain 1"/>
    <property type="match status" value="1"/>
</dbReference>
<dbReference type="InterPro" id="IPR009100">
    <property type="entry name" value="AcylCoA_DH/oxidase_NM_dom_sf"/>
</dbReference>
<dbReference type="SUPFAM" id="SSF56645">
    <property type="entry name" value="Acyl-CoA dehydrogenase NM domain-like"/>
    <property type="match status" value="1"/>
</dbReference>
<comment type="function">
    <text evidence="1">Monooxygenase that initiates the degradation of pyrrole-2-carboxylate, which allows Arthrobacter sp. strain Py1 to grow on pyrrole-2-carboxylate as sole carbon, nitrogen, and energy source. To a lesser extent, can also use pyrrole, pyrrole-2-aldehyde, and indole-2-carboxylate as substrate.</text>
</comment>
<comment type="catalytic activity">
    <reaction evidence="1">
        <text>pyrrole-2-carboxylate + NADH + O2 + H(+) = 5-hydroxypyrrole-2-carboxylate + NAD(+) + H2O</text>
        <dbReference type="Rhea" id="RHEA:30351"/>
        <dbReference type="ChEBI" id="CHEBI:15377"/>
        <dbReference type="ChEBI" id="CHEBI:15378"/>
        <dbReference type="ChEBI" id="CHEBI:15379"/>
        <dbReference type="ChEBI" id="CHEBI:27660"/>
        <dbReference type="ChEBI" id="CHEBI:57540"/>
        <dbReference type="ChEBI" id="CHEBI:57945"/>
        <dbReference type="ChEBI" id="CHEBI:62210"/>
        <dbReference type="EC" id="1.14.13.130"/>
    </reaction>
</comment>
<comment type="cofactor">
    <cofactor evidence="1">
        <name>FAD</name>
        <dbReference type="ChEBI" id="CHEBI:57692"/>
    </cofactor>
</comment>
<comment type="subunit">
    <text evidence="1">Homotrimer.</text>
</comment>
<feature type="chain" id="PRO_0000058129" description="Pyrrole-2-carboxylate oxygenase">
    <location>
        <begin position="1"/>
        <end position="30" status="greater than"/>
    </location>
</feature>
<feature type="non-terminal residue">
    <location>
        <position position="30"/>
    </location>
</feature>